<name>TATA_PARC0</name>
<feature type="chain" id="PRO_1000044346" description="Sec-independent protein translocase protein TatA">
    <location>
        <begin position="1"/>
        <end position="87"/>
    </location>
</feature>
<feature type="transmembrane region" description="Helical" evidence="1">
    <location>
        <begin position="1"/>
        <end position="21"/>
    </location>
</feature>
<feature type="region of interest" description="Disordered" evidence="2">
    <location>
        <begin position="40"/>
        <end position="87"/>
    </location>
</feature>
<feature type="compositionally biased region" description="Low complexity" evidence="2">
    <location>
        <begin position="46"/>
        <end position="64"/>
    </location>
</feature>
<organism>
    <name type="scientific">Paracidovorax citrulli (strain AAC00-1)</name>
    <name type="common">Acidovorax citrulli</name>
    <dbReference type="NCBI Taxonomy" id="397945"/>
    <lineage>
        <taxon>Bacteria</taxon>
        <taxon>Pseudomonadati</taxon>
        <taxon>Pseudomonadota</taxon>
        <taxon>Betaproteobacteria</taxon>
        <taxon>Burkholderiales</taxon>
        <taxon>Comamonadaceae</taxon>
        <taxon>Paracidovorax</taxon>
    </lineage>
</organism>
<comment type="function">
    <text evidence="1">Part of the twin-arginine translocation (Tat) system that transports large folded proteins containing a characteristic twin-arginine motif in their signal peptide across membranes. TatA could form the protein-conducting channel of the Tat system.</text>
</comment>
<comment type="subunit">
    <text evidence="1">The Tat system comprises two distinct complexes: a TatABC complex, containing multiple copies of TatA, TatB and TatC subunits, and a separate TatA complex, containing only TatA subunits. Substrates initially bind to the TatABC complex, which probably triggers association of the separate TatA complex to form the active translocon.</text>
</comment>
<comment type="subcellular location">
    <subcellularLocation>
        <location evidence="1">Cell inner membrane</location>
        <topology evidence="1">Single-pass membrane protein</topology>
    </subcellularLocation>
</comment>
<comment type="similarity">
    <text evidence="1">Belongs to the TatA/E family.</text>
</comment>
<keyword id="KW-0997">Cell inner membrane</keyword>
<keyword id="KW-1003">Cell membrane</keyword>
<keyword id="KW-0472">Membrane</keyword>
<keyword id="KW-0653">Protein transport</keyword>
<keyword id="KW-0811">Translocation</keyword>
<keyword id="KW-0812">Transmembrane</keyword>
<keyword id="KW-1133">Transmembrane helix</keyword>
<keyword id="KW-0813">Transport</keyword>
<gene>
    <name evidence="1" type="primary">tatA</name>
    <name type="ordered locus">Aave_1053</name>
</gene>
<accession>A1TL12</accession>
<protein>
    <recommendedName>
        <fullName evidence="1">Sec-independent protein translocase protein TatA</fullName>
    </recommendedName>
</protein>
<evidence type="ECO:0000255" key="1">
    <source>
        <dbReference type="HAMAP-Rule" id="MF_00236"/>
    </source>
</evidence>
<evidence type="ECO:0000256" key="2">
    <source>
        <dbReference type="SAM" id="MobiDB-lite"/>
    </source>
</evidence>
<proteinExistence type="inferred from homology"/>
<reference key="1">
    <citation type="submission" date="2006-12" db="EMBL/GenBank/DDBJ databases">
        <title>Complete sequence of Acidovorax avenae subsp. citrulli AAC00-1.</title>
        <authorList>
            <person name="Copeland A."/>
            <person name="Lucas S."/>
            <person name="Lapidus A."/>
            <person name="Barry K."/>
            <person name="Detter J.C."/>
            <person name="Glavina del Rio T."/>
            <person name="Dalin E."/>
            <person name="Tice H."/>
            <person name="Pitluck S."/>
            <person name="Kiss H."/>
            <person name="Brettin T."/>
            <person name="Bruce D."/>
            <person name="Han C."/>
            <person name="Tapia R."/>
            <person name="Gilna P."/>
            <person name="Schmutz J."/>
            <person name="Larimer F."/>
            <person name="Land M."/>
            <person name="Hauser L."/>
            <person name="Kyrpides N."/>
            <person name="Kim E."/>
            <person name="Stahl D."/>
            <person name="Richardson P."/>
        </authorList>
    </citation>
    <scope>NUCLEOTIDE SEQUENCE [LARGE SCALE GENOMIC DNA]</scope>
    <source>
        <strain>AAC00-1</strain>
    </source>
</reference>
<dbReference type="EMBL" id="CP000512">
    <property type="protein sequence ID" value="ABM31650.1"/>
    <property type="molecule type" value="Genomic_DNA"/>
</dbReference>
<dbReference type="RefSeq" id="WP_011794208.1">
    <property type="nucleotide sequence ID" value="NC_008752.1"/>
</dbReference>
<dbReference type="SMR" id="A1TL12"/>
<dbReference type="STRING" id="397945.Aave_1053"/>
<dbReference type="GeneID" id="79790708"/>
<dbReference type="KEGG" id="aav:Aave_1053"/>
<dbReference type="eggNOG" id="COG1826">
    <property type="taxonomic scope" value="Bacteria"/>
</dbReference>
<dbReference type="HOGENOM" id="CLU_086034_5_1_4"/>
<dbReference type="OrthoDB" id="7066617at2"/>
<dbReference type="Proteomes" id="UP000002596">
    <property type="component" value="Chromosome"/>
</dbReference>
<dbReference type="GO" id="GO:0033281">
    <property type="term" value="C:TAT protein transport complex"/>
    <property type="evidence" value="ECO:0007669"/>
    <property type="project" value="UniProtKB-UniRule"/>
</dbReference>
<dbReference type="GO" id="GO:0008320">
    <property type="term" value="F:protein transmembrane transporter activity"/>
    <property type="evidence" value="ECO:0007669"/>
    <property type="project" value="UniProtKB-UniRule"/>
</dbReference>
<dbReference type="GO" id="GO:0043953">
    <property type="term" value="P:protein transport by the Tat complex"/>
    <property type="evidence" value="ECO:0007669"/>
    <property type="project" value="UniProtKB-UniRule"/>
</dbReference>
<dbReference type="Gene3D" id="1.20.5.3310">
    <property type="match status" value="1"/>
</dbReference>
<dbReference type="HAMAP" id="MF_00236">
    <property type="entry name" value="TatA_E"/>
    <property type="match status" value="1"/>
</dbReference>
<dbReference type="InterPro" id="IPR003369">
    <property type="entry name" value="TatA/B/E"/>
</dbReference>
<dbReference type="InterPro" id="IPR006312">
    <property type="entry name" value="TatA/E"/>
</dbReference>
<dbReference type="NCBIfam" id="NF002813">
    <property type="entry name" value="PRK02958.1"/>
    <property type="match status" value="1"/>
</dbReference>
<dbReference type="NCBIfam" id="TIGR01411">
    <property type="entry name" value="tatAE"/>
    <property type="match status" value="1"/>
</dbReference>
<dbReference type="PANTHER" id="PTHR42982">
    <property type="entry name" value="SEC-INDEPENDENT PROTEIN TRANSLOCASE PROTEIN TATA"/>
    <property type="match status" value="1"/>
</dbReference>
<dbReference type="PANTHER" id="PTHR42982:SF1">
    <property type="entry name" value="SEC-INDEPENDENT PROTEIN TRANSLOCASE PROTEIN TATA"/>
    <property type="match status" value="1"/>
</dbReference>
<dbReference type="Pfam" id="PF02416">
    <property type="entry name" value="TatA_B_E"/>
    <property type="match status" value="1"/>
</dbReference>
<sequence>MGSFSIWHWLIVLLIVVMVFGTKKLKNIGSDLGGAVKGFKDGMKDGSTPEGTPASTTAATPPAGQVTNQQAHAADPGTIDVEAKHKG</sequence>